<proteinExistence type="evidence at transcript level"/>
<feature type="chain" id="PRO_0000245315" description="Leukotriene B4 receptor 1">
    <location>
        <begin position="1"/>
        <end position="349"/>
    </location>
</feature>
<feature type="topological domain" description="Extracellular" evidence="2">
    <location>
        <begin position="1"/>
        <end position="19"/>
    </location>
</feature>
<feature type="transmembrane region" description="Helical; Name=1" evidence="2">
    <location>
        <begin position="20"/>
        <end position="42"/>
    </location>
</feature>
<feature type="topological domain" description="Cytoplasmic" evidence="2">
    <location>
        <begin position="43"/>
        <end position="54"/>
    </location>
</feature>
<feature type="transmembrane region" description="Helical; Name=2" evidence="2">
    <location>
        <begin position="55"/>
        <end position="75"/>
    </location>
</feature>
<feature type="topological domain" description="Extracellular" evidence="2">
    <location>
        <begin position="76"/>
        <end position="91"/>
    </location>
</feature>
<feature type="transmembrane region" description="Helical; Name=3" evidence="2">
    <location>
        <begin position="92"/>
        <end position="113"/>
    </location>
</feature>
<feature type="topological domain" description="Cytoplasmic" evidence="2">
    <location>
        <begin position="114"/>
        <end position="138"/>
    </location>
</feature>
<feature type="transmembrane region" description="Helical; Name=4" evidence="2">
    <location>
        <begin position="139"/>
        <end position="159"/>
    </location>
</feature>
<feature type="topological domain" description="Extracellular" evidence="2">
    <location>
        <begin position="160"/>
        <end position="179"/>
    </location>
</feature>
<feature type="transmembrane region" description="Helical; Name=5" evidence="2">
    <location>
        <begin position="180"/>
        <end position="200"/>
    </location>
</feature>
<feature type="topological domain" description="Cytoplasmic" evidence="2">
    <location>
        <begin position="201"/>
        <end position="222"/>
    </location>
</feature>
<feature type="transmembrane region" description="Helical; Name=6" evidence="2">
    <location>
        <begin position="223"/>
        <end position="243"/>
    </location>
</feature>
<feature type="topological domain" description="Extracellular" evidence="2">
    <location>
        <begin position="244"/>
        <end position="269"/>
    </location>
</feature>
<feature type="transmembrane region" description="Helical; Name=7" evidence="2">
    <location>
        <begin position="270"/>
        <end position="290"/>
    </location>
</feature>
<feature type="topological domain" description="Cytoplasmic" evidence="2">
    <location>
        <begin position="291"/>
        <end position="349"/>
    </location>
</feature>
<feature type="region of interest" description="Disordered" evidence="4">
    <location>
        <begin position="311"/>
        <end position="349"/>
    </location>
</feature>
<feature type="glycosylation site" description="N-linked (GlcNAc...) asparagine" evidence="2">
    <location>
        <position position="2"/>
    </location>
</feature>
<feature type="glycosylation site" description="N-linked (GlcNAc...) asparagine" evidence="2">
    <location>
        <position position="164"/>
    </location>
</feature>
<dbReference type="EMBL" id="BC102075">
    <property type="protein sequence ID" value="AAI02076.1"/>
    <property type="molecule type" value="mRNA"/>
</dbReference>
<dbReference type="RefSeq" id="NP_001029910.1">
    <property type="nucleotide sequence ID" value="NM_001034738.1"/>
</dbReference>
<dbReference type="SMR" id="Q3T181"/>
<dbReference type="FunCoup" id="Q3T181">
    <property type="interactions" value="389"/>
</dbReference>
<dbReference type="STRING" id="9913.ENSBTAP00000036335"/>
<dbReference type="GlyCosmos" id="Q3T181">
    <property type="glycosylation" value="2 sites, No reported glycans"/>
</dbReference>
<dbReference type="GlyGen" id="Q3T181">
    <property type="glycosylation" value="2 sites"/>
</dbReference>
<dbReference type="PaxDb" id="9913-ENSBTAP00000036335"/>
<dbReference type="Ensembl" id="ENSBTAT00000036478.3">
    <property type="protein sequence ID" value="ENSBTAP00000036335.1"/>
    <property type="gene ID" value="ENSBTAG00000010238.5"/>
</dbReference>
<dbReference type="Ensembl" id="ENSBTAT00000090518.1">
    <property type="protein sequence ID" value="ENSBTAP00000080141.1"/>
    <property type="gene ID" value="ENSBTAG00000010238.5"/>
</dbReference>
<dbReference type="GeneID" id="613482"/>
<dbReference type="KEGG" id="bta:613482"/>
<dbReference type="CTD" id="1241"/>
<dbReference type="VEuPathDB" id="HostDB:ENSBTAG00000010238"/>
<dbReference type="VGNC" id="VGNC:31069">
    <property type="gene designation" value="LTB4R"/>
</dbReference>
<dbReference type="eggNOG" id="KOG3656">
    <property type="taxonomic scope" value="Eukaryota"/>
</dbReference>
<dbReference type="GeneTree" id="ENSGT00950000182966"/>
<dbReference type="HOGENOM" id="CLU_009579_8_0_1"/>
<dbReference type="InParanoid" id="Q3T181"/>
<dbReference type="OMA" id="LCHYICG"/>
<dbReference type="OrthoDB" id="8888529at2759"/>
<dbReference type="TreeFam" id="TF330976"/>
<dbReference type="Reactome" id="R-BTA-391906">
    <property type="pathway name" value="Leukotriene receptors"/>
</dbReference>
<dbReference type="Reactome" id="R-BTA-416476">
    <property type="pathway name" value="G alpha (q) signalling events"/>
</dbReference>
<dbReference type="Proteomes" id="UP000009136">
    <property type="component" value="Chromosome 10"/>
</dbReference>
<dbReference type="Bgee" id="ENSBTAG00000010238">
    <property type="expression patterns" value="Expressed in surface of tongue and 80 other cell types or tissues"/>
</dbReference>
<dbReference type="GO" id="GO:0005886">
    <property type="term" value="C:plasma membrane"/>
    <property type="evidence" value="ECO:0000318"/>
    <property type="project" value="GO_Central"/>
</dbReference>
<dbReference type="GO" id="GO:0008528">
    <property type="term" value="F:G protein-coupled peptide receptor activity"/>
    <property type="evidence" value="ECO:0000318"/>
    <property type="project" value="GO_Central"/>
</dbReference>
<dbReference type="GO" id="GO:0001632">
    <property type="term" value="F:leukotriene B4 receptor activity"/>
    <property type="evidence" value="ECO:0000318"/>
    <property type="project" value="GO_Central"/>
</dbReference>
<dbReference type="GO" id="GO:0007218">
    <property type="term" value="P:neuropeptide signaling pathway"/>
    <property type="evidence" value="ECO:0000318"/>
    <property type="project" value="GO_Central"/>
</dbReference>
<dbReference type="FunFam" id="1.20.1070.10:FF:000109">
    <property type="entry name" value="Leukotriene B4 receptor"/>
    <property type="match status" value="1"/>
</dbReference>
<dbReference type="Gene3D" id="1.20.1070.10">
    <property type="entry name" value="Rhodopsin 7-helix transmembrane proteins"/>
    <property type="match status" value="1"/>
</dbReference>
<dbReference type="InterPro" id="IPR000826">
    <property type="entry name" value="Formyl_rcpt-rel"/>
</dbReference>
<dbReference type="InterPro" id="IPR000276">
    <property type="entry name" value="GPCR_Rhodpsn"/>
</dbReference>
<dbReference type="InterPro" id="IPR017452">
    <property type="entry name" value="GPCR_Rhodpsn_7TM"/>
</dbReference>
<dbReference type="InterPro" id="IPR003981">
    <property type="entry name" value="Leukotriene_B4_rcpt"/>
</dbReference>
<dbReference type="InterPro" id="IPR003983">
    <property type="entry name" value="Leukotriene_B4_typ-1_rcpt"/>
</dbReference>
<dbReference type="PANTHER" id="PTHR24225">
    <property type="entry name" value="CHEMOTACTIC RECEPTOR"/>
    <property type="match status" value="1"/>
</dbReference>
<dbReference type="PANTHER" id="PTHR24225:SF72">
    <property type="entry name" value="G-PROTEIN COUPLED RECEPTORS FAMILY 1 PROFILE DOMAIN-CONTAINING PROTEIN-RELATED"/>
    <property type="match status" value="1"/>
</dbReference>
<dbReference type="Pfam" id="PF00001">
    <property type="entry name" value="7tm_1"/>
    <property type="match status" value="1"/>
</dbReference>
<dbReference type="PRINTS" id="PR00237">
    <property type="entry name" value="GPCRRHODOPSN"/>
</dbReference>
<dbReference type="PRINTS" id="PR01477">
    <property type="entry name" value="LTB1RECEPTOR"/>
</dbReference>
<dbReference type="PRINTS" id="PR01476">
    <property type="entry name" value="LTBRECEPTOR"/>
</dbReference>
<dbReference type="SUPFAM" id="SSF81321">
    <property type="entry name" value="Family A G protein-coupled receptor-like"/>
    <property type="match status" value="1"/>
</dbReference>
<dbReference type="PROSITE" id="PS00237">
    <property type="entry name" value="G_PROTEIN_RECEP_F1_1"/>
    <property type="match status" value="1"/>
</dbReference>
<dbReference type="PROSITE" id="PS50262">
    <property type="entry name" value="G_PROTEIN_RECEP_F1_2"/>
    <property type="match status" value="1"/>
</dbReference>
<protein>
    <recommendedName>
        <fullName>Leukotriene B4 receptor 1</fullName>
        <shortName>LTB4-R 1</shortName>
        <shortName>LTB4-R1</shortName>
    </recommendedName>
</protein>
<accession>Q3T181</accession>
<name>LT4R1_BOVIN</name>
<reference key="1">
    <citation type="submission" date="2005-08" db="EMBL/GenBank/DDBJ databases">
        <authorList>
            <consortium name="NIH - Mammalian Gene Collection (MGC) project"/>
        </authorList>
    </citation>
    <scope>NUCLEOTIDE SEQUENCE [LARGE SCALE MRNA]</scope>
    <source>
        <strain>Crossbred X Angus</strain>
        <tissue>Ileum</tissue>
    </source>
</reference>
<evidence type="ECO:0000250" key="1"/>
<evidence type="ECO:0000255" key="2"/>
<evidence type="ECO:0000255" key="3">
    <source>
        <dbReference type="PROSITE-ProRule" id="PRU00521"/>
    </source>
</evidence>
<evidence type="ECO:0000256" key="4">
    <source>
        <dbReference type="SAM" id="MobiDB-lite"/>
    </source>
</evidence>
<gene>
    <name type="primary">LTB4R</name>
</gene>
<keyword id="KW-1003">Cell membrane</keyword>
<keyword id="KW-0297">G-protein coupled receptor</keyword>
<keyword id="KW-0325">Glycoprotein</keyword>
<keyword id="KW-0472">Membrane</keyword>
<keyword id="KW-0597">Phosphoprotein</keyword>
<keyword id="KW-0675">Receptor</keyword>
<keyword id="KW-1185">Reference proteome</keyword>
<keyword id="KW-0807">Transducer</keyword>
<keyword id="KW-0812">Transmembrane</keyword>
<keyword id="KW-1133">Transmembrane helix</keyword>
<organism>
    <name type="scientific">Bos taurus</name>
    <name type="common">Bovine</name>
    <dbReference type="NCBI Taxonomy" id="9913"/>
    <lineage>
        <taxon>Eukaryota</taxon>
        <taxon>Metazoa</taxon>
        <taxon>Chordata</taxon>
        <taxon>Craniata</taxon>
        <taxon>Vertebrata</taxon>
        <taxon>Euteleostomi</taxon>
        <taxon>Mammalia</taxon>
        <taxon>Eutheria</taxon>
        <taxon>Laurasiatheria</taxon>
        <taxon>Artiodactyla</taxon>
        <taxon>Ruminantia</taxon>
        <taxon>Pecora</taxon>
        <taxon>Bovidae</taxon>
        <taxon>Bovinae</taxon>
        <taxon>Bos</taxon>
    </lineage>
</organism>
<comment type="function">
    <text evidence="1">Receptor for extracellular ATP &gt; UTP and ADP. The activity of this receptor is mediated by G proteins which activate a phosphatidylinositol-calcium second messenger system. May be the cardiac P2Y receptor involved in the regulation of cardiac muscle contraction through modulation of L-type calcium currents. Is a receptor for leukotriene B4, a potent chemoattractant involved in inflammation and immune response (By similarity).</text>
</comment>
<comment type="subcellular location">
    <subcellularLocation>
        <location>Cell membrane</location>
        <topology>Multi-pass membrane protein</topology>
    </subcellularLocation>
</comment>
<comment type="PTM">
    <text evidence="1">Phosphorylated by GRK6 upon leukotriene B4 binding; which promotes desensitization.</text>
</comment>
<comment type="similarity">
    <text evidence="3">Belongs to the G-protein coupled receptor 1 family.</text>
</comment>
<sequence length="349" mass="37689">MNTTSPAAPSSSGVSFISLLVIIVLSVALAVGLPGNSFVVWSILAKLRKRSVTALMVLHLALADLAVLLTAPFFLYSVAQGTWTFGLSSCRLFHYVCGVSMYASVLLIMTMSLDRSLAVALPFVSQKLRTKAVAWRVLAGIWVMSVLLATPVLLYRTVHLGLNNRSLTCFLKYPSERHRAFHLFFEVITGFLLPFLVVVASYCDIGRRLRARRFRRSRRTGRLVALIILAFAAFWLPYHVVNLAEGFRAAAGKALGSGPVGRRLLLARHVLITLAFLSSSVNPLLYACAGGGLLRSAGVGFIAKLLEGTGSETSSSRRKGTLAQTLRGTPASPEPDPAESLTASTNPLE</sequence>